<reference key="1">
    <citation type="journal article" date="1996" name="J. Bacteriol.">
        <title>Identification and characterization of additional flagellin genes from Vibrio anguillarum.</title>
        <authorList>
            <person name="McGee K."/>
            <person name="Hoerstedt P."/>
            <person name="Milton D.L."/>
        </authorList>
    </citation>
    <scope>NUCLEOTIDE SEQUENCE [GENOMIC DNA]</scope>
    <source>
        <strain>NB10 / Serotype O1</strain>
    </source>
</reference>
<reference key="2">
    <citation type="journal article" date="1996" name="J. Bacteriol.">
        <title>Flagellin A is essential for the virulence of Vibrio anguillarum.</title>
        <authorList>
            <person name="Milton D.L."/>
            <person name="O'Toole R."/>
            <person name="Hoerstedt P."/>
            <person name="Wolf-Watz H."/>
        </authorList>
    </citation>
    <scope>PROTEIN SEQUENCE OF 2-18</scope>
    <source>
        <strain>NB10 / Serotype O1</strain>
    </source>
</reference>
<name>FLAC_VIBAN</name>
<evidence type="ECO:0000255" key="1"/>
<evidence type="ECO:0000269" key="2">
    <source>
    </source>
</evidence>
<evidence type="ECO:0000305" key="3"/>
<comment type="function">
    <text>Flagellin is the subunit protein which polymerizes to form the filaments of bacterial flagella. FlaC is not essential for flagellar synthesis and motility.</text>
</comment>
<comment type="subunit">
    <text>Heteromer of multiple flagellin subunits including FlaA, FlaB, FlaC, FlaD and possibly FlaE.</text>
</comment>
<comment type="subcellular location">
    <subcellularLocation>
        <location>Secreted</location>
    </subcellularLocation>
    <subcellularLocation>
        <location>Bacterial flagellum</location>
    </subcellularLocation>
</comment>
<comment type="similarity">
    <text evidence="3">Belongs to the bacterial flagellin family.</text>
</comment>
<dbReference type="EMBL" id="U52199">
    <property type="protein sequence ID" value="AAB09437.1"/>
    <property type="molecule type" value="Genomic_DNA"/>
</dbReference>
<dbReference type="RefSeq" id="WP_026029038.1">
    <property type="nucleotide sequence ID" value="NZ_VTYO01000002.1"/>
</dbReference>
<dbReference type="SMR" id="Q56574"/>
<dbReference type="STRING" id="55601.AA407_04005"/>
<dbReference type="PATRIC" id="fig|882102.3.peg.987"/>
<dbReference type="GO" id="GO:0009288">
    <property type="term" value="C:bacterial-type flagellum"/>
    <property type="evidence" value="ECO:0007669"/>
    <property type="project" value="UniProtKB-SubCell"/>
</dbReference>
<dbReference type="GO" id="GO:0005576">
    <property type="term" value="C:extracellular region"/>
    <property type="evidence" value="ECO:0007669"/>
    <property type="project" value="UniProtKB-SubCell"/>
</dbReference>
<dbReference type="GO" id="GO:0005198">
    <property type="term" value="F:structural molecule activity"/>
    <property type="evidence" value="ECO:0007669"/>
    <property type="project" value="InterPro"/>
</dbReference>
<dbReference type="Gene3D" id="3.30.70.2120">
    <property type="match status" value="1"/>
</dbReference>
<dbReference type="Gene3D" id="1.20.1330.10">
    <property type="entry name" value="f41 fragment of flagellin, N-terminal domain"/>
    <property type="match status" value="1"/>
</dbReference>
<dbReference type="Gene3D" id="6.10.10.10">
    <property type="entry name" value="Flagellar export chaperone, C-terminal domain"/>
    <property type="match status" value="1"/>
</dbReference>
<dbReference type="InterPro" id="IPR001492">
    <property type="entry name" value="Flagellin"/>
</dbReference>
<dbReference type="InterPro" id="IPR046358">
    <property type="entry name" value="Flagellin_C"/>
</dbReference>
<dbReference type="InterPro" id="IPR042187">
    <property type="entry name" value="Flagellin_C_sub2"/>
</dbReference>
<dbReference type="InterPro" id="IPR010810">
    <property type="entry name" value="Flagellin_hook_IN_motif"/>
</dbReference>
<dbReference type="InterPro" id="IPR001029">
    <property type="entry name" value="Flagellin_N"/>
</dbReference>
<dbReference type="NCBIfam" id="NF006466">
    <property type="entry name" value="PRK08869.1-1"/>
    <property type="match status" value="1"/>
</dbReference>
<dbReference type="NCBIfam" id="NF006468">
    <property type="entry name" value="PRK08869.1-3"/>
    <property type="match status" value="1"/>
</dbReference>
<dbReference type="PANTHER" id="PTHR42792">
    <property type="entry name" value="FLAGELLIN"/>
    <property type="match status" value="1"/>
</dbReference>
<dbReference type="PANTHER" id="PTHR42792:SF2">
    <property type="entry name" value="FLAGELLIN"/>
    <property type="match status" value="1"/>
</dbReference>
<dbReference type="Pfam" id="PF00700">
    <property type="entry name" value="Flagellin_C"/>
    <property type="match status" value="1"/>
</dbReference>
<dbReference type="Pfam" id="PF07196">
    <property type="entry name" value="Flagellin_IN"/>
    <property type="match status" value="1"/>
</dbReference>
<dbReference type="Pfam" id="PF00669">
    <property type="entry name" value="Flagellin_N"/>
    <property type="match status" value="1"/>
</dbReference>
<dbReference type="PRINTS" id="PR00207">
    <property type="entry name" value="FLAGELLIN"/>
</dbReference>
<dbReference type="SUPFAM" id="SSF64518">
    <property type="entry name" value="Phase 1 flagellin"/>
    <property type="match status" value="1"/>
</dbReference>
<sequence>MAVNVNTNVSAMTAQRYLNSASNAQQLSMERLSSGFKINNAKDDAAGLQISNRLNVQSRGLDVAVRNANDGISIAQTAEGAMNETTNILQRMRDLSLQSSNGSNSKADRVAIQEEITALNDELNRIAETTSFGGNKLLNGTFETKSFQIGADNGEAVMLSLNNMRSDNAMMGGKSYQAANGQDKDWTVKAGANDLTITLTDKRTGEQTINLSAKDGDDIEELATYINGQTDMLKASVDDEGKLQIFTDSNRIDGVATFGGSLAGELSFQAAKDVTVDTIDVTSVGGSQESVAIVDAALQFVDSHRAQLGAFQNRFNHAINNLDNINENVNASKSRIKDTDFAKETTALTKSQILSQASSSVLAQAKQAPNAALGLLG</sequence>
<protein>
    <recommendedName>
        <fullName>Flagellin C</fullName>
    </recommendedName>
</protein>
<organism>
    <name type="scientific">Vibrio anguillarum</name>
    <name type="common">Listonella anguillarum</name>
    <dbReference type="NCBI Taxonomy" id="55601"/>
    <lineage>
        <taxon>Bacteria</taxon>
        <taxon>Pseudomonadati</taxon>
        <taxon>Pseudomonadota</taxon>
        <taxon>Gammaproteobacteria</taxon>
        <taxon>Vibrionales</taxon>
        <taxon>Vibrionaceae</taxon>
        <taxon>Vibrio</taxon>
    </lineage>
</organism>
<feature type="initiator methionine" description="Removed" evidence="2">
    <location>
        <position position="1"/>
    </location>
</feature>
<feature type="chain" id="PRO_0000182645" description="Flagellin C">
    <location>
        <begin position="2"/>
        <end position="377"/>
    </location>
</feature>
<feature type="coiled-coil region" evidence="1">
    <location>
        <begin position="103"/>
        <end position="129"/>
    </location>
</feature>
<feature type="coiled-coil region" evidence="1">
    <location>
        <begin position="301"/>
        <end position="340"/>
    </location>
</feature>
<proteinExistence type="evidence at protein level"/>
<gene>
    <name type="primary">flaC</name>
</gene>
<keyword id="KW-0975">Bacterial flagellum</keyword>
<keyword id="KW-0175">Coiled coil</keyword>
<keyword id="KW-0903">Direct protein sequencing</keyword>
<keyword id="KW-0964">Secreted</keyword>
<accession>Q56574</accession>